<protein>
    <recommendedName>
        <fullName>Tyrosine-protein kinase Fyn</fullName>
        <ecNumber>2.7.10.2</ecNumber>
    </recommendedName>
    <alternativeName>
        <fullName>Proto-oncogene c-Fyn</fullName>
    </alternativeName>
    <alternativeName>
        <fullName>p59-Fyn</fullName>
    </alternativeName>
</protein>
<feature type="initiator methionine" description="Removed" evidence="2">
    <location>
        <position position="1"/>
    </location>
</feature>
<feature type="chain" id="PRO_0000282948" description="Tyrosine-protein kinase Fyn">
    <location>
        <begin position="2"/>
        <end position="537"/>
    </location>
</feature>
<feature type="domain" description="SH3" evidence="7">
    <location>
        <begin position="82"/>
        <end position="143"/>
    </location>
</feature>
<feature type="domain" description="SH2" evidence="6">
    <location>
        <begin position="149"/>
        <end position="246"/>
    </location>
</feature>
<feature type="domain" description="Protein kinase" evidence="5">
    <location>
        <begin position="271"/>
        <end position="524"/>
    </location>
</feature>
<feature type="region of interest" description="Disordered" evidence="9">
    <location>
        <begin position="14"/>
        <end position="35"/>
    </location>
</feature>
<feature type="active site" description="Proton acceptor" evidence="3 5 8">
    <location>
        <position position="390"/>
    </location>
</feature>
<feature type="binding site" evidence="3 5">
    <location>
        <begin position="277"/>
        <end position="285"/>
    </location>
    <ligand>
        <name>ATP</name>
        <dbReference type="ChEBI" id="CHEBI:30616"/>
    </ligand>
</feature>
<feature type="binding site" evidence="5 10">
    <location>
        <position position="299"/>
    </location>
    <ligand>
        <name>ATP</name>
        <dbReference type="ChEBI" id="CHEBI:30616"/>
    </ligand>
</feature>
<feature type="modified residue" description="Phosphoserine" evidence="2">
    <location>
        <position position="21"/>
    </location>
</feature>
<feature type="modified residue" description="Phosphoserine" evidence="2">
    <location>
        <position position="26"/>
    </location>
</feature>
<feature type="modified residue" description="Phosphotyrosine" evidence="4">
    <location>
        <position position="185"/>
    </location>
</feature>
<feature type="modified residue" description="Phosphotyrosine; by autocatalysis" evidence="4">
    <location>
        <position position="420"/>
    </location>
</feature>
<feature type="modified residue" description="Phosphotyrosine" evidence="16">
    <location>
        <position position="531"/>
    </location>
</feature>
<feature type="lipid moiety-binding region" description="N-myristoyl glycine" evidence="4">
    <location>
        <position position="2"/>
    </location>
</feature>
<feature type="lipid moiety-binding region" description="S-palmitoyl cysteine" evidence="4">
    <location>
        <position position="3"/>
    </location>
</feature>
<feature type="lipid moiety-binding region" description="S-palmitoyl cysteine" evidence="4">
    <location>
        <position position="6"/>
    </location>
</feature>
<feature type="mutagenesis site" description="Loss of kinase activity and reduction in oligodendrocyte process extension and myelin membrane formation." evidence="10">
    <original>K</original>
    <variation>M</variation>
    <location>
        <position position="299"/>
    </location>
</feature>
<evidence type="ECO:0000250" key="1"/>
<evidence type="ECO:0000250" key="2">
    <source>
        <dbReference type="UniProtKB" id="P06241"/>
    </source>
</evidence>
<evidence type="ECO:0000250" key="3">
    <source>
        <dbReference type="UniProtKB" id="P28523"/>
    </source>
</evidence>
<evidence type="ECO:0000250" key="4">
    <source>
        <dbReference type="UniProtKB" id="P39688"/>
    </source>
</evidence>
<evidence type="ECO:0000255" key="5">
    <source>
        <dbReference type="PROSITE-ProRule" id="PRU00159"/>
    </source>
</evidence>
<evidence type="ECO:0000255" key="6">
    <source>
        <dbReference type="PROSITE-ProRule" id="PRU00191"/>
    </source>
</evidence>
<evidence type="ECO:0000255" key="7">
    <source>
        <dbReference type="PROSITE-ProRule" id="PRU00192"/>
    </source>
</evidence>
<evidence type="ECO:0000255" key="8">
    <source>
        <dbReference type="PROSITE-ProRule" id="PRU10028"/>
    </source>
</evidence>
<evidence type="ECO:0000256" key="9">
    <source>
        <dbReference type="SAM" id="MobiDB-lite"/>
    </source>
</evidence>
<evidence type="ECO:0000269" key="10">
    <source>
    </source>
</evidence>
<evidence type="ECO:0000269" key="11">
    <source>
    </source>
</evidence>
<evidence type="ECO:0000305" key="12"/>
<evidence type="ECO:0000312" key="13">
    <source>
        <dbReference type="EMBL" id="AAA82942.1"/>
    </source>
</evidence>
<evidence type="ECO:0000312" key="14">
    <source>
        <dbReference type="PIR" id="PT0199"/>
    </source>
</evidence>
<evidence type="ECO:0000312" key="15">
    <source>
        <dbReference type="RGD" id="2641"/>
    </source>
</evidence>
<evidence type="ECO:0007744" key="16">
    <source>
    </source>
</evidence>
<comment type="function">
    <text evidence="2 4 10">Non-receptor tyrosine-protein kinase that plays a role in many biological processes including regulation of cell growth and survival, cell adhesion, integrin-mediated signaling, cytoskeletal remodeling, cell motility, immune response and axon guidance (PubMed:10366594). Inactive FYN is phosphorylated on its C-terminal tail within the catalytic domain (By similarity). Following activation by PKA, the protein subsequently associates with PTK2/FAK1, allowing PTK2/FAK1 phosphorylation, activation and targeting to focal adhesions (By similarity). Involved in the regulation of cell adhesion and motility through phosphorylation of CTNNB1 (beta-catenin) and CTNND1 (delta-catenin) (By similarity). Regulates cytoskeletal remodeling by phosphorylating several proteins including the actin regulator WAS and the microtubule-associated proteins MAP2 and MAPT (By similarity). Promotes cell survival by phosphorylating AGAP2/PIKE-A and preventing its apoptotic cleavage (By similarity). Participates in signal transduction pathways that regulate the integrity of the glomerular slit diaphragm (an essential part of the glomerular filter of the kidney) by phosphorylating several slit diaphragm components including NPHS1, KIRREL1 and TRPC6 (By similarity). Plays a role in neural processes by phosphorylating DPYSL2, a multifunctional adapter protein within the central nervous system, ARHGAP32, a regulator for Rho family GTPases implicated in various neural functions, and SNCA, a small pre-synaptic protein (By similarity). Involved in reelin signaling by mediating phosphorylation of DAB1 following reelin (RELN)-binding to its receptor (By similarity). Participates in the downstream signaling pathways that lead to T-cell differentiation and proliferation following T-cell receptor (TCR) stimulation (By similarity). Phosphorylates PTK2B/PYK2 in response to T-cell receptor activation (By similarity). Also participates in negative feedback regulation of TCR signaling through phosphorylation of PAG1, thereby promoting interaction between PAG1 and CSK and recruitment of CSK to lipid rafts (By similarity). CSK maintains LCK and FYN in an inactive form (By similarity). Promotes CD28-induced phosphorylation of VAV1 (By similarity). In mast cells, phosphorylates CLNK after activation of immunoglobulin epsilon receptor signaling (By similarity). Can also promote CD244-mediated NK cell activation (By similarity).</text>
</comment>
<comment type="catalytic activity">
    <reaction evidence="8 10">
        <text>L-tyrosyl-[protein] + ATP = O-phospho-L-tyrosyl-[protein] + ADP + H(+)</text>
        <dbReference type="Rhea" id="RHEA:10596"/>
        <dbReference type="Rhea" id="RHEA-COMP:10136"/>
        <dbReference type="Rhea" id="RHEA-COMP:20101"/>
        <dbReference type="ChEBI" id="CHEBI:15378"/>
        <dbReference type="ChEBI" id="CHEBI:30616"/>
        <dbReference type="ChEBI" id="CHEBI:46858"/>
        <dbReference type="ChEBI" id="CHEBI:61978"/>
        <dbReference type="ChEBI" id="CHEBI:456216"/>
        <dbReference type="EC" id="2.7.10.2"/>
    </reaction>
</comment>
<comment type="cofactor">
    <cofactor evidence="10">
        <name>Mn(2+)</name>
        <dbReference type="ChEBI" id="CHEBI:29035"/>
    </cofactor>
</comment>
<comment type="activity regulation">
    <text evidence="1">Inhibited by phosphorylation of Tyr-531 by leukocyte common antigen and activated by dephosphorylation of this site.</text>
</comment>
<comment type="subunit">
    <text evidence="2 4 11">Interacts (via its SH3 domain) with PIK3R1 and PRMT8. Interacts with FYB1, PAG1, and SH2D1A. Interacts with CD79A (tyrosine-phosphorylated form); the interaction increases FYN activity. Interacts (via SH2 domain) with CSF1R (tyrosine phosphorylated) (By similarity). Interacts with TOM1L1 (phosphorylated form). Interacts with KDR (tyrosine phosphorylated). Interacts (via SH3 domain) with KLHL2 (via N-terminus) (PubMed:15715669). Interacts with SH2D1A and SLAMF1. Interacts with ITCH; the interaction phosphorylates ITCH and negatively regulates its activity. Interacts with FASLG. Interacts with RUNX3. Interacts with KIT. Interacts with EPHA8; possible downstream effector of EPHA8 in regulation of cell adhesion. Interacts with PTK2/FAK1; this interaction leads to PTK2/FAK1 phosphorylation and activation. Interacts with CAV1; this interaction couples integrins to the Ras-ERK pathway. Interacts with UNC119. Interacts (via SH2 domain) with PTPRH (phosphorylated form) (By similarity). Interacts with PTPRO (phosphorylated form) (By similarity). Interacts with PTPRB (phosphorylated form) (By similarity). Interacts with FYB2 (By similarity). Interacts with DSCAM (By similarity). Interacts with SKAP1 and FYB1; this interaction promotes the phosphorylation of CLNK (By similarity). Interacts with NEDD9; in the presence of PTK2 (By similarity).</text>
</comment>
<comment type="subcellular location">
    <subcellularLocation>
        <location evidence="2">Cytoplasm</location>
    </subcellularLocation>
    <subcellularLocation>
        <location evidence="2">Nucleus</location>
    </subcellularLocation>
    <subcellularLocation>
        <location evidence="2">Cell membrane</location>
    </subcellularLocation>
    <subcellularLocation>
        <location evidence="10">Perikaryon</location>
    </subcellularLocation>
    <text evidence="2">Present and active in lipid rafts (By similarity). Palmitoylation is crucial for proper trafficking (By similarity).</text>
</comment>
<comment type="tissue specificity">
    <text evidence="11">Detected in spinal cord oligodendrocytes (at protein level).</text>
</comment>
<comment type="developmental stage">
    <text evidence="10">Up-regulated during oligodendrocyte differentiation.</text>
</comment>
<comment type="PTM">
    <text evidence="2 4">Autophosphorylated at Tyr-420 (By similarity). Phosphorylation on the C-terminal tail at Tyr-531 by CSK maintains the enzyme in an inactive state. PTPRC/CD45 dephosphorylates Tyr-531 leading to activation. Dephosphorylation at Tyr-420 by PTPN2 negatively regulates T-cell receptor signaling (By similarity). Phosphorylated at tyrosine residues, which can be enhanced by NTN1 (By similarity).</text>
</comment>
<comment type="PTM">
    <text evidence="4">Palmitoylated. Palmitoylation at Cys-3 and Cys-6, probably by ZDHHC21, regulates subcellular location.</text>
</comment>
<comment type="similarity">
    <text evidence="5">Belongs to the protein kinase superfamily. Tyr protein kinase family. SRC subfamily.</text>
</comment>
<keyword id="KW-0067">ATP-binding</keyword>
<keyword id="KW-1003">Cell membrane</keyword>
<keyword id="KW-0963">Cytoplasm</keyword>
<keyword id="KW-0217">Developmental protein</keyword>
<keyword id="KW-0418">Kinase</keyword>
<keyword id="KW-0449">Lipoprotein</keyword>
<keyword id="KW-0464">Manganese</keyword>
<keyword id="KW-0472">Membrane</keyword>
<keyword id="KW-0479">Metal-binding</keyword>
<keyword id="KW-0519">Myristate</keyword>
<keyword id="KW-0547">Nucleotide-binding</keyword>
<keyword id="KW-0539">Nucleus</keyword>
<keyword id="KW-0564">Palmitate</keyword>
<keyword id="KW-0597">Phosphoprotein</keyword>
<keyword id="KW-1185">Reference proteome</keyword>
<keyword id="KW-0727">SH2 domain</keyword>
<keyword id="KW-0728">SH3 domain</keyword>
<keyword id="KW-0808">Transferase</keyword>
<keyword id="KW-0829">Tyrosine-protein kinase</keyword>
<organism>
    <name type="scientific">Rattus norvegicus</name>
    <name type="common">Rat</name>
    <dbReference type="NCBI Taxonomy" id="10116"/>
    <lineage>
        <taxon>Eukaryota</taxon>
        <taxon>Metazoa</taxon>
        <taxon>Chordata</taxon>
        <taxon>Craniata</taxon>
        <taxon>Vertebrata</taxon>
        <taxon>Euteleostomi</taxon>
        <taxon>Mammalia</taxon>
        <taxon>Eutheria</taxon>
        <taxon>Euarchontoglires</taxon>
        <taxon>Glires</taxon>
        <taxon>Rodentia</taxon>
        <taxon>Myomorpha</taxon>
        <taxon>Muroidea</taxon>
        <taxon>Muridae</taxon>
        <taxon>Murinae</taxon>
        <taxon>Rattus</taxon>
    </lineage>
</organism>
<sequence length="537" mass="60702">MGCVQCKDKEAAKLTEERDGSLNQSSGYRYGTDPTPQHYPSFGVTSIPNYNNFHAAGGQGLTVFGGVNSSSHTGTLRTRGGTGVTLFVALYDYEARTEDDLSFHKGEKFQILNSSEGDWWEARSLTTGETGYIPSNYVAPVDSIQAEEWYFGKLGRKDAERQLLSFGNPRGTFLIRESETTKGAYSLSIRDWDDMKGDHVKHYKIRKLDNGGYYITTRAQFETLQQLVQHYSERAAGLCCRLVVPCHKGMPRLTDLSVKTKDVWEIPRESLQLIKRLGNGQFGEVWMGTWNGNTKVAIKTLKPGTMSPESFLEEAQIMKKLKHDKLVQLYAVVSEEPIYIVTEYMNKGSLLDFLKDGEGRALKLPNLVDMAAQVAAGMAYIERMNYIHRDLRSANILVGNGLICKIADFGLARLIEDNEYTARQGAKFPIKWTAPEAALYGRFTIKSDVWSFGILLTELVTKGRVPYPGMNNREVLEQVERGYRMPCPQDCPISLHELMIHCWKKDPEERPTFEYLQGFLEDYFTATEPQYQPGENL</sequence>
<accession>Q62844</accession>
<gene>
    <name evidence="15" type="primary">Fyn</name>
</gene>
<name>FYN_RAT</name>
<dbReference type="EC" id="2.7.10.2"/>
<dbReference type="EMBL" id="U35365">
    <property type="protein sequence ID" value="AAA82942.1"/>
    <property type="molecule type" value="mRNA"/>
</dbReference>
<dbReference type="PIR" id="PT0199">
    <property type="entry name" value="PT0199"/>
</dbReference>
<dbReference type="RefSeq" id="NP_036887.1">
    <property type="nucleotide sequence ID" value="NM_012755.2"/>
</dbReference>
<dbReference type="RefSeq" id="XP_038954364.1">
    <property type="nucleotide sequence ID" value="XM_039098436.2"/>
</dbReference>
<dbReference type="SMR" id="Q62844"/>
<dbReference type="BioGRID" id="247215">
    <property type="interactions" value="6"/>
</dbReference>
<dbReference type="CORUM" id="Q62844"/>
<dbReference type="FunCoup" id="Q62844">
    <property type="interactions" value="1898"/>
</dbReference>
<dbReference type="IntAct" id="Q62844">
    <property type="interactions" value="4"/>
</dbReference>
<dbReference type="MINT" id="Q62844"/>
<dbReference type="STRING" id="10116.ENSRNOP00000000733"/>
<dbReference type="iPTMnet" id="Q62844"/>
<dbReference type="PhosphoSitePlus" id="Q62844"/>
<dbReference type="SwissPalm" id="Q62844"/>
<dbReference type="jPOST" id="Q62844"/>
<dbReference type="PaxDb" id="10116-ENSRNOP00000000733"/>
<dbReference type="Ensembl" id="ENSRNOT00000000733.5">
    <property type="protein sequence ID" value="ENSRNOP00000000733.1"/>
    <property type="gene ID" value="ENSRNOG00000000596.7"/>
</dbReference>
<dbReference type="GeneID" id="25150"/>
<dbReference type="KEGG" id="rno:25150"/>
<dbReference type="UCSC" id="RGD:2641">
    <property type="organism name" value="rat"/>
</dbReference>
<dbReference type="AGR" id="RGD:2641"/>
<dbReference type="CTD" id="2534"/>
<dbReference type="RGD" id="2641">
    <property type="gene designation" value="Fyn"/>
</dbReference>
<dbReference type="eggNOG" id="KOG0197">
    <property type="taxonomic scope" value="Eukaryota"/>
</dbReference>
<dbReference type="GeneTree" id="ENSGT00940000155462"/>
<dbReference type="InParanoid" id="Q62844"/>
<dbReference type="OrthoDB" id="4062651at2759"/>
<dbReference type="PhylomeDB" id="Q62844"/>
<dbReference type="TreeFam" id="TF351634"/>
<dbReference type="Reactome" id="R-RNO-114604">
    <property type="pathway name" value="GPVI-mediated activation cascade"/>
</dbReference>
<dbReference type="Reactome" id="R-RNO-1227986">
    <property type="pathway name" value="Signaling by ERBB2"/>
</dbReference>
<dbReference type="Reactome" id="R-RNO-1257604">
    <property type="pathway name" value="PIP3 activates AKT signaling"/>
</dbReference>
<dbReference type="Reactome" id="R-RNO-1433557">
    <property type="pathway name" value="Signaling by SCF-KIT"/>
</dbReference>
<dbReference type="Reactome" id="R-RNO-1433559">
    <property type="pathway name" value="Regulation of KIT signaling"/>
</dbReference>
<dbReference type="Reactome" id="R-RNO-202733">
    <property type="pathway name" value="Cell surface interactions at the vascular wall"/>
</dbReference>
<dbReference type="Reactome" id="R-RNO-2029481">
    <property type="pathway name" value="FCGR activation"/>
</dbReference>
<dbReference type="Reactome" id="R-RNO-210990">
    <property type="pathway name" value="PECAM1 interactions"/>
</dbReference>
<dbReference type="Reactome" id="R-RNO-2424491">
    <property type="pathway name" value="DAP12 signaling"/>
</dbReference>
<dbReference type="Reactome" id="R-RNO-373753">
    <property type="pathway name" value="Nephrin family interactions"/>
</dbReference>
<dbReference type="Reactome" id="R-RNO-375165">
    <property type="pathway name" value="NCAM signaling for neurite out-growth"/>
</dbReference>
<dbReference type="Reactome" id="R-RNO-389356">
    <property type="pathway name" value="Co-stimulation by CD28"/>
</dbReference>
<dbReference type="Reactome" id="R-RNO-389357">
    <property type="pathway name" value="CD28 dependent PI3K/Akt signaling"/>
</dbReference>
<dbReference type="Reactome" id="R-RNO-389359">
    <property type="pathway name" value="CD28 dependent Vav1 pathway"/>
</dbReference>
<dbReference type="Reactome" id="R-RNO-389513">
    <property type="pathway name" value="Co-inhibition by CTLA4"/>
</dbReference>
<dbReference type="Reactome" id="R-RNO-3928662">
    <property type="pathway name" value="EPHB-mediated forward signaling"/>
</dbReference>
<dbReference type="Reactome" id="R-RNO-3928663">
    <property type="pathway name" value="EPHA-mediated growth cone collapse"/>
</dbReference>
<dbReference type="Reactome" id="R-RNO-3928664">
    <property type="pathway name" value="Ephrin signaling"/>
</dbReference>
<dbReference type="Reactome" id="R-RNO-3928665">
    <property type="pathway name" value="EPH-ephrin mediated repulsion of cells"/>
</dbReference>
<dbReference type="Reactome" id="R-RNO-399954">
    <property type="pathway name" value="Sema3A PAK dependent Axon repulsion"/>
</dbReference>
<dbReference type="Reactome" id="R-RNO-399955">
    <property type="pathway name" value="SEMA3A-Plexin repulsion signaling by inhibiting Integrin adhesion"/>
</dbReference>
<dbReference type="Reactome" id="R-RNO-399956">
    <property type="pathway name" value="CRMPs in Sema3A signaling"/>
</dbReference>
<dbReference type="Reactome" id="R-RNO-418885">
    <property type="pathway name" value="DCC mediated attractive signaling"/>
</dbReference>
<dbReference type="Reactome" id="R-RNO-4420097">
    <property type="pathway name" value="VEGFA-VEGFR2 Pathway"/>
</dbReference>
<dbReference type="Reactome" id="R-RNO-5621480">
    <property type="pathway name" value="Dectin-2 family"/>
</dbReference>
<dbReference type="Reactome" id="R-RNO-5621575">
    <property type="pathway name" value="CD209 (DC-SIGN) signaling"/>
</dbReference>
<dbReference type="Reactome" id="R-RNO-5673001">
    <property type="pathway name" value="RAF/MAP kinase cascade"/>
</dbReference>
<dbReference type="Reactome" id="R-RNO-6811558">
    <property type="pathway name" value="PI5P, PP2A and IER3 Regulate PI3K/AKT Signaling"/>
</dbReference>
<dbReference type="Reactome" id="R-RNO-75892">
    <property type="pathway name" value="Platelet Adhesion to exposed collagen"/>
</dbReference>
<dbReference type="Reactome" id="R-RNO-8866376">
    <property type="pathway name" value="Reelin signalling pathway"/>
</dbReference>
<dbReference type="Reactome" id="R-RNO-9032759">
    <property type="pathway name" value="NTRK2 activates RAC1"/>
</dbReference>
<dbReference type="Reactome" id="R-RNO-912631">
    <property type="pathway name" value="Regulation of signaling by CBL"/>
</dbReference>
<dbReference type="PRO" id="PR:Q62844"/>
<dbReference type="Proteomes" id="UP000002494">
    <property type="component" value="Chromosome 20"/>
</dbReference>
<dbReference type="Bgee" id="ENSRNOG00000000596">
    <property type="expression patterns" value="Expressed in thymus and 20 other cell types or tissues"/>
</dbReference>
<dbReference type="ExpressionAtlas" id="Q62844">
    <property type="expression patterns" value="baseline and differential"/>
</dbReference>
<dbReference type="GO" id="GO:0005884">
    <property type="term" value="C:actin filament"/>
    <property type="evidence" value="ECO:0000266"/>
    <property type="project" value="RGD"/>
</dbReference>
<dbReference type="GO" id="GO:0044297">
    <property type="term" value="C:cell body"/>
    <property type="evidence" value="ECO:0000266"/>
    <property type="project" value="RGD"/>
</dbReference>
<dbReference type="GO" id="GO:0071944">
    <property type="term" value="C:cell periphery"/>
    <property type="evidence" value="ECO:0000266"/>
    <property type="project" value="RGD"/>
</dbReference>
<dbReference type="GO" id="GO:0005829">
    <property type="term" value="C:cytosol"/>
    <property type="evidence" value="ECO:0000304"/>
    <property type="project" value="Reactome"/>
</dbReference>
<dbReference type="GO" id="GO:0030425">
    <property type="term" value="C:dendrite"/>
    <property type="evidence" value="ECO:0000314"/>
    <property type="project" value="ARUK-UCL"/>
</dbReference>
<dbReference type="GO" id="GO:0005768">
    <property type="term" value="C:endosome"/>
    <property type="evidence" value="ECO:0000266"/>
    <property type="project" value="RGD"/>
</dbReference>
<dbReference type="GO" id="GO:0097386">
    <property type="term" value="C:glial cell projection"/>
    <property type="evidence" value="ECO:0000266"/>
    <property type="project" value="RGD"/>
</dbReference>
<dbReference type="GO" id="GO:0098978">
    <property type="term" value="C:glutamatergic synapse"/>
    <property type="evidence" value="ECO:0000314"/>
    <property type="project" value="SynGO"/>
</dbReference>
<dbReference type="GO" id="GO:0045121">
    <property type="term" value="C:membrane raft"/>
    <property type="evidence" value="ECO:0000266"/>
    <property type="project" value="RGD"/>
</dbReference>
<dbReference type="GO" id="GO:0005739">
    <property type="term" value="C:mitochondrion"/>
    <property type="evidence" value="ECO:0000314"/>
    <property type="project" value="ARUK-UCL"/>
</dbReference>
<dbReference type="GO" id="GO:0005634">
    <property type="term" value="C:nucleus"/>
    <property type="evidence" value="ECO:0000314"/>
    <property type="project" value="ARUK-UCL"/>
</dbReference>
<dbReference type="GO" id="GO:0043204">
    <property type="term" value="C:perikaryon"/>
    <property type="evidence" value="ECO:0007669"/>
    <property type="project" value="UniProtKB-SubCell"/>
</dbReference>
<dbReference type="GO" id="GO:0097038">
    <property type="term" value="C:perinuclear endoplasmic reticulum"/>
    <property type="evidence" value="ECO:0000314"/>
    <property type="project" value="ARUK-UCL"/>
</dbReference>
<dbReference type="GO" id="GO:0048471">
    <property type="term" value="C:perinuclear region of cytoplasm"/>
    <property type="evidence" value="ECO:0000314"/>
    <property type="project" value="ARUK-UCL"/>
</dbReference>
<dbReference type="GO" id="GO:0005886">
    <property type="term" value="C:plasma membrane"/>
    <property type="evidence" value="ECO:0000266"/>
    <property type="project" value="RGD"/>
</dbReference>
<dbReference type="GO" id="GO:0014069">
    <property type="term" value="C:postsynaptic density"/>
    <property type="evidence" value="ECO:0000314"/>
    <property type="project" value="ARUK-UCL"/>
</dbReference>
<dbReference type="GO" id="GO:0099092">
    <property type="term" value="C:postsynaptic density, intracellular component"/>
    <property type="evidence" value="ECO:0000314"/>
    <property type="project" value="SynGO"/>
</dbReference>
<dbReference type="GO" id="GO:0098685">
    <property type="term" value="C:Schaffer collateral - CA1 synapse"/>
    <property type="evidence" value="ECO:0000266"/>
    <property type="project" value="RGD"/>
</dbReference>
<dbReference type="GO" id="GO:0043014">
    <property type="term" value="F:alpha-tubulin binding"/>
    <property type="evidence" value="ECO:0000266"/>
    <property type="project" value="RGD"/>
</dbReference>
<dbReference type="GO" id="GO:0005524">
    <property type="term" value="F:ATP binding"/>
    <property type="evidence" value="ECO:0007669"/>
    <property type="project" value="UniProtKB-KW"/>
</dbReference>
<dbReference type="GO" id="GO:0042609">
    <property type="term" value="F:CD4 receptor binding"/>
    <property type="evidence" value="ECO:0000353"/>
    <property type="project" value="RGD"/>
</dbReference>
<dbReference type="GO" id="GO:0042610">
    <property type="term" value="F:CD8 receptor binding"/>
    <property type="evidence" value="ECO:0000353"/>
    <property type="project" value="RGD"/>
</dbReference>
<dbReference type="GO" id="GO:0097718">
    <property type="term" value="F:disordered domain specific binding"/>
    <property type="evidence" value="ECO:0000266"/>
    <property type="project" value="RGD"/>
</dbReference>
<dbReference type="GO" id="GO:0019899">
    <property type="term" value="F:enzyme binding"/>
    <property type="evidence" value="ECO:0000353"/>
    <property type="project" value="RGD"/>
</dbReference>
<dbReference type="GO" id="GO:0046875">
    <property type="term" value="F:ephrin receptor binding"/>
    <property type="evidence" value="ECO:0000266"/>
    <property type="project" value="RGD"/>
</dbReference>
<dbReference type="GO" id="GO:0001664">
    <property type="term" value="F:G protein-coupled receptor binding"/>
    <property type="evidence" value="ECO:0000266"/>
    <property type="project" value="RGD"/>
</dbReference>
<dbReference type="GO" id="GO:0070851">
    <property type="term" value="F:growth factor receptor binding"/>
    <property type="evidence" value="ECO:0000266"/>
    <property type="project" value="RGD"/>
</dbReference>
<dbReference type="GO" id="GO:0042802">
    <property type="term" value="F:identical protein binding"/>
    <property type="evidence" value="ECO:0000266"/>
    <property type="project" value="RGD"/>
</dbReference>
<dbReference type="GO" id="GO:0046872">
    <property type="term" value="F:metal ion binding"/>
    <property type="evidence" value="ECO:0007669"/>
    <property type="project" value="UniProtKB-KW"/>
</dbReference>
<dbReference type="GO" id="GO:0004715">
    <property type="term" value="F:non-membrane spanning protein tyrosine kinase activity"/>
    <property type="evidence" value="ECO:0000266"/>
    <property type="project" value="RGD"/>
</dbReference>
<dbReference type="GO" id="GO:0051428">
    <property type="term" value="F:peptide hormone receptor binding"/>
    <property type="evidence" value="ECO:0000353"/>
    <property type="project" value="RGD"/>
</dbReference>
<dbReference type="GO" id="GO:0043548">
    <property type="term" value="F:phosphatidylinositol 3-kinase binding"/>
    <property type="evidence" value="ECO:0000314"/>
    <property type="project" value="RGD"/>
</dbReference>
<dbReference type="GO" id="GO:0016004">
    <property type="term" value="F:phospholipase activator activity"/>
    <property type="evidence" value="ECO:0000266"/>
    <property type="project" value="RGD"/>
</dbReference>
<dbReference type="GO" id="GO:0043274">
    <property type="term" value="F:phospholipase binding"/>
    <property type="evidence" value="ECO:0000266"/>
    <property type="project" value="RGD"/>
</dbReference>
<dbReference type="GO" id="GO:0004672">
    <property type="term" value="F:protein kinase activity"/>
    <property type="evidence" value="ECO:0000314"/>
    <property type="project" value="RGD"/>
</dbReference>
<dbReference type="GO" id="GO:0004713">
    <property type="term" value="F:protein tyrosine kinase activity"/>
    <property type="evidence" value="ECO:0000314"/>
    <property type="project" value="RGD"/>
</dbReference>
<dbReference type="GO" id="GO:0044877">
    <property type="term" value="F:protein-containing complex binding"/>
    <property type="evidence" value="ECO:0000353"/>
    <property type="project" value="RGD"/>
</dbReference>
<dbReference type="GO" id="GO:0097110">
    <property type="term" value="F:scaffold protein binding"/>
    <property type="evidence" value="ECO:0000266"/>
    <property type="project" value="RGD"/>
</dbReference>
<dbReference type="GO" id="GO:0005102">
    <property type="term" value="F:signaling receptor binding"/>
    <property type="evidence" value="ECO:0000353"/>
    <property type="project" value="RGD"/>
</dbReference>
<dbReference type="GO" id="GO:0042608">
    <property type="term" value="F:T cell receptor binding"/>
    <property type="evidence" value="ECO:0000314"/>
    <property type="project" value="RGD"/>
</dbReference>
<dbReference type="GO" id="GO:0048156">
    <property type="term" value="F:tau protein binding"/>
    <property type="evidence" value="ECO:0000266"/>
    <property type="project" value="RGD"/>
</dbReference>
<dbReference type="GO" id="GO:0044325">
    <property type="term" value="F:transmembrane transporter binding"/>
    <property type="evidence" value="ECO:0000266"/>
    <property type="project" value="RGD"/>
</dbReference>
<dbReference type="GO" id="GO:0015631">
    <property type="term" value="F:tubulin binding"/>
    <property type="evidence" value="ECO:0000266"/>
    <property type="project" value="RGD"/>
</dbReference>
<dbReference type="GO" id="GO:0031802">
    <property type="term" value="F:type 5 metabotropic glutamate receptor binding"/>
    <property type="evidence" value="ECO:0000353"/>
    <property type="project" value="ARUK-UCL"/>
</dbReference>
<dbReference type="GO" id="GO:0050798">
    <property type="term" value="P:activated T cell proliferation"/>
    <property type="evidence" value="ECO:0000266"/>
    <property type="project" value="RGD"/>
</dbReference>
<dbReference type="GO" id="GO:0030154">
    <property type="term" value="P:cell differentiation"/>
    <property type="evidence" value="ECO:0000318"/>
    <property type="project" value="GO_Central"/>
</dbReference>
<dbReference type="GO" id="GO:0007169">
    <property type="term" value="P:cell surface receptor protein tyrosine kinase signaling pathway"/>
    <property type="evidence" value="ECO:0000318"/>
    <property type="project" value="GO_Central"/>
</dbReference>
<dbReference type="GO" id="GO:0007166">
    <property type="term" value="P:cell surface receptor signaling pathway"/>
    <property type="evidence" value="ECO:0000266"/>
    <property type="project" value="RGD"/>
</dbReference>
<dbReference type="GO" id="GO:1904646">
    <property type="term" value="P:cellular response to amyloid-beta"/>
    <property type="evidence" value="ECO:0000266"/>
    <property type="project" value="RGD"/>
</dbReference>
<dbReference type="GO" id="GO:1905430">
    <property type="term" value="P:cellular response to glycine"/>
    <property type="evidence" value="ECO:0000315"/>
    <property type="project" value="ARUK-UCL"/>
</dbReference>
<dbReference type="GO" id="GO:0071363">
    <property type="term" value="P:cellular response to growth factor stimulus"/>
    <property type="evidence" value="ECO:0000270"/>
    <property type="project" value="RGD"/>
</dbReference>
<dbReference type="GO" id="GO:0070301">
    <property type="term" value="P:cellular response to hydrogen peroxide"/>
    <property type="evidence" value="ECO:0000314"/>
    <property type="project" value="ARUK-UCL"/>
</dbReference>
<dbReference type="GO" id="GO:1905232">
    <property type="term" value="P:cellular response to L-glutamate"/>
    <property type="evidence" value="ECO:0000315"/>
    <property type="project" value="ARUK-UCL"/>
</dbReference>
<dbReference type="GO" id="GO:0071375">
    <property type="term" value="P:cellular response to peptide hormone stimulus"/>
    <property type="evidence" value="ECO:0000270"/>
    <property type="project" value="RGD"/>
</dbReference>
<dbReference type="GO" id="GO:0036120">
    <property type="term" value="P:cellular response to platelet-derived growth factor stimulus"/>
    <property type="evidence" value="ECO:0000266"/>
    <property type="project" value="RGD"/>
</dbReference>
<dbReference type="GO" id="GO:0071560">
    <property type="term" value="P:cellular response to transforming growth factor beta stimulus"/>
    <property type="evidence" value="ECO:0000266"/>
    <property type="project" value="RGD"/>
</dbReference>
<dbReference type="GO" id="GO:0048813">
    <property type="term" value="P:dendrite morphogenesis"/>
    <property type="evidence" value="ECO:0000266"/>
    <property type="project" value="RGD"/>
</dbReference>
<dbReference type="GO" id="GO:0050966">
    <property type="term" value="P:detection of mechanical stimulus involved in sensory perception of pain"/>
    <property type="evidence" value="ECO:0000266"/>
    <property type="project" value="RGD"/>
</dbReference>
<dbReference type="GO" id="GO:0030900">
    <property type="term" value="P:forebrain development"/>
    <property type="evidence" value="ECO:0000266"/>
    <property type="project" value="RGD"/>
</dbReference>
<dbReference type="GO" id="GO:0007216">
    <property type="term" value="P:G protein-coupled glutamate receptor signaling pathway"/>
    <property type="evidence" value="ECO:0000266"/>
    <property type="project" value="RGD"/>
</dbReference>
<dbReference type="GO" id="GO:0010467">
    <property type="term" value="P:gene expression"/>
    <property type="evidence" value="ECO:0000266"/>
    <property type="project" value="RGD"/>
</dbReference>
<dbReference type="GO" id="GO:0003015">
    <property type="term" value="P:heart process"/>
    <property type="evidence" value="ECO:0000266"/>
    <property type="project" value="RGD"/>
</dbReference>
<dbReference type="GO" id="GO:0035556">
    <property type="term" value="P:intracellular signal transduction"/>
    <property type="evidence" value="ECO:0000315"/>
    <property type="project" value="ARUK-UCL"/>
</dbReference>
<dbReference type="GO" id="GO:0035235">
    <property type="term" value="P:ionotropic glutamate receptor signaling pathway"/>
    <property type="evidence" value="ECO:0000304"/>
    <property type="project" value="RGD"/>
</dbReference>
<dbReference type="GO" id="GO:0050804">
    <property type="term" value="P:modulation of chemical synaptic transmission"/>
    <property type="evidence" value="ECO:0000266"/>
    <property type="project" value="RGD"/>
</dbReference>
<dbReference type="GO" id="GO:0030101">
    <property type="term" value="P:natural killer cell activation"/>
    <property type="evidence" value="ECO:0000266"/>
    <property type="project" value="RGD"/>
</dbReference>
<dbReference type="GO" id="GO:0016525">
    <property type="term" value="P:negative regulation of angiogenesis"/>
    <property type="evidence" value="ECO:0000266"/>
    <property type="project" value="RGD"/>
</dbReference>
<dbReference type="GO" id="GO:1902951">
    <property type="term" value="P:negative regulation of dendritic spine maintenance"/>
    <property type="evidence" value="ECO:0000266"/>
    <property type="project" value="RGD"/>
</dbReference>
<dbReference type="GO" id="GO:2001240">
    <property type="term" value="P:negative regulation of extrinsic apoptotic signaling pathway in absence of ligand"/>
    <property type="evidence" value="ECO:0000315"/>
    <property type="project" value="UniProtKB"/>
</dbReference>
<dbReference type="GO" id="GO:0010629">
    <property type="term" value="P:negative regulation of gene expression"/>
    <property type="evidence" value="ECO:0000266"/>
    <property type="project" value="RGD"/>
</dbReference>
<dbReference type="GO" id="GO:0010730">
    <property type="term" value="P:negative regulation of hydrogen peroxide biosynthetic process"/>
    <property type="evidence" value="ECO:0000315"/>
    <property type="project" value="ARUK-UCL"/>
</dbReference>
<dbReference type="GO" id="GO:0043524">
    <property type="term" value="P:negative regulation of neuron apoptotic process"/>
    <property type="evidence" value="ECO:0000315"/>
    <property type="project" value="UniProtKB"/>
</dbReference>
<dbReference type="GO" id="GO:1902176">
    <property type="term" value="P:negative regulation of oxidative stress-induced intrinsic apoptotic signaling pathway"/>
    <property type="evidence" value="ECO:0000315"/>
    <property type="project" value="ARUK-UCL"/>
</dbReference>
<dbReference type="GO" id="GO:0042177">
    <property type="term" value="P:negative regulation of protein catabolic process"/>
    <property type="evidence" value="ECO:0000266"/>
    <property type="project" value="RGD"/>
</dbReference>
<dbReference type="GO" id="GO:0031397">
    <property type="term" value="P:negative regulation of protein ubiquitination"/>
    <property type="evidence" value="ECO:0000266"/>
    <property type="project" value="RGD"/>
</dbReference>
<dbReference type="GO" id="GO:0001764">
    <property type="term" value="P:neuron migration"/>
    <property type="evidence" value="ECO:0000266"/>
    <property type="project" value="RGD"/>
</dbReference>
<dbReference type="GO" id="GO:0031175">
    <property type="term" value="P:neuron projection development"/>
    <property type="evidence" value="ECO:0000266"/>
    <property type="project" value="RGD"/>
</dbReference>
<dbReference type="GO" id="GO:0010976">
    <property type="term" value="P:positive regulation of neuron projection development"/>
    <property type="evidence" value="ECO:0000266"/>
    <property type="project" value="RGD"/>
</dbReference>
<dbReference type="GO" id="GO:0051897">
    <property type="term" value="P:positive regulation of phosphatidylinositol 3-kinase/protein kinase B signal transduction"/>
    <property type="evidence" value="ECO:0000315"/>
    <property type="project" value="UniProtKB"/>
</dbReference>
<dbReference type="GO" id="GO:1900182">
    <property type="term" value="P:positive regulation of protein localization to nucleus"/>
    <property type="evidence" value="ECO:0000266"/>
    <property type="project" value="RGD"/>
</dbReference>
<dbReference type="GO" id="GO:0090314">
    <property type="term" value="P:positive regulation of protein targeting to membrane"/>
    <property type="evidence" value="ECO:0000266"/>
    <property type="project" value="RGD"/>
</dbReference>
<dbReference type="GO" id="GO:0030163">
    <property type="term" value="P:protein catabolic process"/>
    <property type="evidence" value="ECO:0000266"/>
    <property type="project" value="RGD"/>
</dbReference>
<dbReference type="GO" id="GO:0016567">
    <property type="term" value="P:protein ubiquitination"/>
    <property type="evidence" value="ECO:0000266"/>
    <property type="project" value="RGD"/>
</dbReference>
<dbReference type="GO" id="GO:0038026">
    <property type="term" value="P:reelin-mediated signaling pathway"/>
    <property type="evidence" value="ECO:0000250"/>
    <property type="project" value="UniProtKB"/>
</dbReference>
<dbReference type="GO" id="GO:1905664">
    <property type="term" value="P:regulation of calcium ion import across plasma membrane"/>
    <property type="evidence" value="ECO:0000266"/>
    <property type="project" value="RGD"/>
</dbReference>
<dbReference type="GO" id="GO:0008360">
    <property type="term" value="P:regulation of cell shape"/>
    <property type="evidence" value="ECO:0000266"/>
    <property type="project" value="RGD"/>
</dbReference>
<dbReference type="GO" id="GO:1900449">
    <property type="term" value="P:regulation of glutamate receptor signaling pathway"/>
    <property type="evidence" value="ECO:0000266"/>
    <property type="project" value="RGD"/>
</dbReference>
<dbReference type="GO" id="GO:1904645">
    <property type="term" value="P:response to amyloid-beta"/>
    <property type="evidence" value="ECO:0000266"/>
    <property type="project" value="RGD"/>
</dbReference>
<dbReference type="GO" id="GO:0042220">
    <property type="term" value="P:response to cocaine"/>
    <property type="evidence" value="ECO:0000270"/>
    <property type="project" value="RGD"/>
</dbReference>
<dbReference type="GO" id="GO:0045471">
    <property type="term" value="P:response to ethanol"/>
    <property type="evidence" value="ECO:0000266"/>
    <property type="project" value="RGD"/>
</dbReference>
<dbReference type="GO" id="GO:0000304">
    <property type="term" value="P:response to singlet oxygen"/>
    <property type="evidence" value="ECO:0000314"/>
    <property type="project" value="ARUK-UCL"/>
</dbReference>
<dbReference type="GO" id="GO:0009410">
    <property type="term" value="P:response to xenobiotic stimulus"/>
    <property type="evidence" value="ECO:0000270"/>
    <property type="project" value="RGD"/>
</dbReference>
<dbReference type="GO" id="GO:0050852">
    <property type="term" value="P:T cell receptor signaling pathway"/>
    <property type="evidence" value="ECO:0000266"/>
    <property type="project" value="RGD"/>
</dbReference>
<dbReference type="CDD" id="cd05070">
    <property type="entry name" value="PTKc_Fyn"/>
    <property type="match status" value="1"/>
</dbReference>
<dbReference type="CDD" id="cd10418">
    <property type="entry name" value="SH2_Src_Fyn_isoform_a_like"/>
    <property type="match status" value="1"/>
</dbReference>
<dbReference type="CDD" id="cd12006">
    <property type="entry name" value="SH3_Fyn_Yrk"/>
    <property type="match status" value="1"/>
</dbReference>
<dbReference type="FunFam" id="1.10.510.10:FF:000553">
    <property type="entry name" value="Tyrosine-protein kinase"/>
    <property type="match status" value="1"/>
</dbReference>
<dbReference type="FunFam" id="3.30.200.20:FF:000016">
    <property type="entry name" value="Tyrosine-protein kinase"/>
    <property type="match status" value="1"/>
</dbReference>
<dbReference type="FunFam" id="2.30.30.40:FF:000182">
    <property type="entry name" value="Tyrosine-protein kinase Fyn"/>
    <property type="match status" value="1"/>
</dbReference>
<dbReference type="FunFam" id="3.30.505.10:FF:000120">
    <property type="entry name" value="Tyrosine-protein kinase Fyn"/>
    <property type="match status" value="1"/>
</dbReference>
<dbReference type="Gene3D" id="3.30.200.20">
    <property type="entry name" value="Phosphorylase Kinase, domain 1"/>
    <property type="match status" value="1"/>
</dbReference>
<dbReference type="Gene3D" id="3.30.505.10">
    <property type="entry name" value="SH2 domain"/>
    <property type="match status" value="1"/>
</dbReference>
<dbReference type="Gene3D" id="2.30.30.40">
    <property type="entry name" value="SH3 Domains"/>
    <property type="match status" value="1"/>
</dbReference>
<dbReference type="Gene3D" id="1.10.510.10">
    <property type="entry name" value="Transferase(Phosphotransferase) domain 1"/>
    <property type="match status" value="1"/>
</dbReference>
<dbReference type="InterPro" id="IPR047924">
    <property type="entry name" value="Fyn/Yrk_SH2"/>
</dbReference>
<dbReference type="InterPro" id="IPR035750">
    <property type="entry name" value="Fyn/Yrk_SH3"/>
</dbReference>
<dbReference type="InterPro" id="IPR011009">
    <property type="entry name" value="Kinase-like_dom_sf"/>
</dbReference>
<dbReference type="InterPro" id="IPR050198">
    <property type="entry name" value="Non-receptor_tyrosine_kinases"/>
</dbReference>
<dbReference type="InterPro" id="IPR000719">
    <property type="entry name" value="Prot_kinase_dom"/>
</dbReference>
<dbReference type="InterPro" id="IPR017441">
    <property type="entry name" value="Protein_kinase_ATP_BS"/>
</dbReference>
<dbReference type="InterPro" id="IPR001245">
    <property type="entry name" value="Ser-Thr/Tyr_kinase_cat_dom"/>
</dbReference>
<dbReference type="InterPro" id="IPR000980">
    <property type="entry name" value="SH2"/>
</dbReference>
<dbReference type="InterPro" id="IPR036860">
    <property type="entry name" value="SH2_dom_sf"/>
</dbReference>
<dbReference type="InterPro" id="IPR036028">
    <property type="entry name" value="SH3-like_dom_sf"/>
</dbReference>
<dbReference type="InterPro" id="IPR001452">
    <property type="entry name" value="SH3_domain"/>
</dbReference>
<dbReference type="InterPro" id="IPR008266">
    <property type="entry name" value="Tyr_kinase_AS"/>
</dbReference>
<dbReference type="InterPro" id="IPR020635">
    <property type="entry name" value="Tyr_kinase_cat_dom"/>
</dbReference>
<dbReference type="PANTHER" id="PTHR24418">
    <property type="entry name" value="TYROSINE-PROTEIN KINASE"/>
    <property type="match status" value="1"/>
</dbReference>
<dbReference type="Pfam" id="PF07714">
    <property type="entry name" value="PK_Tyr_Ser-Thr"/>
    <property type="match status" value="1"/>
</dbReference>
<dbReference type="Pfam" id="PF00017">
    <property type="entry name" value="SH2"/>
    <property type="match status" value="1"/>
</dbReference>
<dbReference type="Pfam" id="PF00018">
    <property type="entry name" value="SH3_1"/>
    <property type="match status" value="1"/>
</dbReference>
<dbReference type="PRINTS" id="PR00401">
    <property type="entry name" value="SH2DOMAIN"/>
</dbReference>
<dbReference type="PRINTS" id="PR00452">
    <property type="entry name" value="SH3DOMAIN"/>
</dbReference>
<dbReference type="PRINTS" id="PR00109">
    <property type="entry name" value="TYRKINASE"/>
</dbReference>
<dbReference type="SMART" id="SM00252">
    <property type="entry name" value="SH2"/>
    <property type="match status" value="1"/>
</dbReference>
<dbReference type="SMART" id="SM00326">
    <property type="entry name" value="SH3"/>
    <property type="match status" value="1"/>
</dbReference>
<dbReference type="SMART" id="SM00219">
    <property type="entry name" value="TyrKc"/>
    <property type="match status" value="1"/>
</dbReference>
<dbReference type="SUPFAM" id="SSF56112">
    <property type="entry name" value="Protein kinase-like (PK-like)"/>
    <property type="match status" value="1"/>
</dbReference>
<dbReference type="SUPFAM" id="SSF55550">
    <property type="entry name" value="SH2 domain"/>
    <property type="match status" value="1"/>
</dbReference>
<dbReference type="SUPFAM" id="SSF50044">
    <property type="entry name" value="SH3-domain"/>
    <property type="match status" value="1"/>
</dbReference>
<dbReference type="PROSITE" id="PS00107">
    <property type="entry name" value="PROTEIN_KINASE_ATP"/>
    <property type="match status" value="1"/>
</dbReference>
<dbReference type="PROSITE" id="PS50011">
    <property type="entry name" value="PROTEIN_KINASE_DOM"/>
    <property type="match status" value="1"/>
</dbReference>
<dbReference type="PROSITE" id="PS00109">
    <property type="entry name" value="PROTEIN_KINASE_TYR"/>
    <property type="match status" value="1"/>
</dbReference>
<dbReference type="PROSITE" id="PS50001">
    <property type="entry name" value="SH2"/>
    <property type="match status" value="1"/>
</dbReference>
<dbReference type="PROSITE" id="PS50002">
    <property type="entry name" value="SH3"/>
    <property type="match status" value="1"/>
</dbReference>
<reference evidence="13" key="1">
    <citation type="submission" date="1995-09" db="EMBL/GenBank/DDBJ databases">
        <title>Expression of three type mRNAs encoding rat FYN by alternative splicing within 5' untranslated region.</title>
        <authorList>
            <person name="Nemoto K."/>
            <person name="Sekimoto M."/>
            <person name="Kageyama H."/>
            <person name="Fukamachi K."/>
            <person name="Nemoto F."/>
            <person name="Ueyama T."/>
            <person name="Senba E."/>
            <person name="Tomita I."/>
        </authorList>
    </citation>
    <scope>NUCLEOTIDE SEQUENCE [MRNA]</scope>
    <source>
        <strain evidence="13">SHRSP</strain>
        <tissue evidence="13">Brain</tissue>
    </source>
</reference>
<reference evidence="14" key="2">
    <citation type="journal article" date="1991" name="Mol. Immunol.">
        <title>Novel putative protein kinase clones from a rat large granular lymphocyte tumor cell line.</title>
        <authorList>
            <person name="Yue C.C."/>
        </authorList>
    </citation>
    <scope>NUCLEOTIDE SEQUENCE [MRNA]</scope>
</reference>
<reference evidence="12" key="3">
    <citation type="journal article" date="1999" name="J. Cell Biol.">
        <title>Morphological differentiation of oligodendrocytes requires activation of Fyn tyrosine kinase.</title>
        <authorList>
            <person name="Osterhout D.J."/>
            <person name="Wolven A."/>
            <person name="Wolf R.M."/>
            <person name="Resh M.D."/>
            <person name="Chao M.V."/>
        </authorList>
    </citation>
    <scope>FUNCTION</scope>
    <scope>SUBCELLULAR LOCATION</scope>
    <scope>DEVELOPMENTAL STAGE</scope>
    <scope>MUTAGENESIS OF LYS-299</scope>
</reference>
<reference key="4">
    <citation type="journal article" date="2005" name="J. Neurochem.">
        <title>Process elongation of oligodendrocytes is promoted by the Kelch-related actin-binding protein Mayven.</title>
        <authorList>
            <person name="Jiang S."/>
            <person name="Avraham H.K."/>
            <person name="Park S.Y."/>
            <person name="Kim T.A."/>
            <person name="Bu X."/>
            <person name="Seng S."/>
            <person name="Avraham S."/>
        </authorList>
    </citation>
    <scope>INTERACTION WITH KLHL2</scope>
    <scope>TISSUE SPECIFICITY</scope>
</reference>
<reference key="5">
    <citation type="journal article" date="2012" name="Nat. Commun.">
        <title>Quantitative maps of protein phosphorylation sites across 14 different rat organs and tissues.</title>
        <authorList>
            <person name="Lundby A."/>
            <person name="Secher A."/>
            <person name="Lage K."/>
            <person name="Nordsborg N.B."/>
            <person name="Dmytriyev A."/>
            <person name="Lundby C."/>
            <person name="Olsen J.V."/>
        </authorList>
    </citation>
    <scope>PHOSPHORYLATION [LARGE SCALE ANALYSIS] AT TYR-531</scope>
    <scope>IDENTIFICATION BY MASS SPECTROMETRY [LARGE SCALE ANALYSIS]</scope>
</reference>
<proteinExistence type="evidence at protein level"/>